<dbReference type="EMBL" id="AJ299406">
    <property type="protein sequence ID" value="CAC13974.1"/>
    <property type="molecule type" value="mRNA"/>
</dbReference>
<dbReference type="EMBL" id="AK289793">
    <property type="protein sequence ID" value="BAF82482.1"/>
    <property type="molecule type" value="mRNA"/>
</dbReference>
<dbReference type="EMBL" id="AL359853">
    <property type="status" value="NOT_ANNOTATED_CDS"/>
    <property type="molecule type" value="Genomic_DNA"/>
</dbReference>
<dbReference type="EMBL" id="CH471067">
    <property type="protein sequence ID" value="EAW91065.1"/>
    <property type="molecule type" value="Genomic_DNA"/>
</dbReference>
<dbReference type="EMBL" id="BC032790">
    <property type="protein sequence ID" value="AAH32790.1"/>
    <property type="status" value="ALT_SEQ"/>
    <property type="molecule type" value="mRNA"/>
</dbReference>
<dbReference type="EMBL" id="BC096704">
    <property type="protein sequence ID" value="AAH96704.1"/>
    <property type="molecule type" value="mRNA"/>
</dbReference>
<dbReference type="EMBL" id="BC098170">
    <property type="protein sequence ID" value="AAH98170.1"/>
    <property type="molecule type" value="mRNA"/>
</dbReference>
<dbReference type="EMBL" id="BC098309">
    <property type="protein sequence ID" value="AAH98309.1"/>
    <property type="molecule type" value="mRNA"/>
</dbReference>
<dbReference type="EMBL" id="BC098348">
    <property type="protein sequence ID" value="AAH98348.1"/>
    <property type="molecule type" value="mRNA"/>
</dbReference>
<dbReference type="CCDS" id="CCDS53439.1">
    <molecule id="Q9H496-1"/>
</dbReference>
<dbReference type="RefSeq" id="NP_001336860.1">
    <molecule id="Q9H496-1"/>
    <property type="nucleotide sequence ID" value="NM_001349931.2"/>
</dbReference>
<dbReference type="RefSeq" id="NP_001336862.1">
    <molecule id="Q9H496-1"/>
    <property type="nucleotide sequence ID" value="NM_001349933.1"/>
</dbReference>
<dbReference type="RefSeq" id="NP_071742.1">
    <molecule id="Q9H496-1"/>
    <property type="nucleotide sequence ID" value="NM_022347.5"/>
</dbReference>
<dbReference type="RefSeq" id="XP_016855966.1">
    <property type="nucleotide sequence ID" value="XM_017000477.1"/>
</dbReference>
<dbReference type="RefSeq" id="XP_016855967.1">
    <property type="nucleotide sequence ID" value="XM_017000478.1"/>
</dbReference>
<dbReference type="BioGRID" id="127870">
    <property type="interactions" value="269"/>
</dbReference>
<dbReference type="IntAct" id="Q9H496">
    <property type="interactions" value="12"/>
</dbReference>
<dbReference type="iPTMnet" id="Q9H496"/>
<dbReference type="PhosphoSitePlus" id="Q9H496"/>
<dbReference type="BioMuta" id="TOR1AIP2"/>
<dbReference type="jPOST" id="Q9H496"/>
<dbReference type="MassIVE" id="Q9H496"/>
<dbReference type="ProteomicsDB" id="80800">
    <molecule id="Q9H496-1"/>
</dbReference>
<dbReference type="Pumba" id="Q9H496"/>
<dbReference type="Antibodypedia" id="60527">
    <property type="antibodies" value="70 antibodies from 16 providers"/>
</dbReference>
<dbReference type="DNASU" id="163590"/>
<dbReference type="Ensembl" id="ENST00000482587.5">
    <molecule id="Q9H496-1"/>
    <property type="protein sequence ID" value="ENSP00000485355.1"/>
    <property type="gene ID" value="ENSG00000169905.13"/>
</dbReference>
<dbReference type="GeneID" id="163590"/>
<dbReference type="UCSC" id="uc001gnn.4">
    <molecule id="Q9H496-1"/>
    <property type="organism name" value="human"/>
</dbReference>
<dbReference type="AGR" id="HGNC:24055"/>
<dbReference type="CTD" id="163590"/>
<dbReference type="DisGeNET" id="163590"/>
<dbReference type="GeneCards" id="TOR1AIP2"/>
<dbReference type="HGNC" id="HGNC:24055">
    <property type="gene designation" value="TOR1AIP2"/>
</dbReference>
<dbReference type="HPA" id="ENSG00000169905">
    <property type="expression patterns" value="Low tissue specificity"/>
</dbReference>
<dbReference type="MalaCards" id="TOR1AIP2"/>
<dbReference type="MIM" id="614513">
    <property type="type" value="gene"/>
</dbReference>
<dbReference type="neXtProt" id="NX_Q9H496"/>
<dbReference type="OpenTargets" id="ENSG00000169905"/>
<dbReference type="VEuPathDB" id="HostDB:ENSG00000169905"/>
<dbReference type="GeneTree" id="ENSGT00390000012166"/>
<dbReference type="HOGENOM" id="CLU_2139075_0_0_1"/>
<dbReference type="OrthoDB" id="6258998at2759"/>
<dbReference type="PhylomeDB" id="Q9H496"/>
<dbReference type="PathwayCommons" id="Q9H496"/>
<dbReference type="SignaLink" id="Q9H496"/>
<dbReference type="BioGRID-ORCS" id="163590">
    <property type="hits" value="74 hits in 1162 CRISPR screens"/>
</dbReference>
<dbReference type="ChiTaRS" id="TOR1AIP2">
    <property type="organism name" value="human"/>
</dbReference>
<dbReference type="GenomeRNAi" id="163590"/>
<dbReference type="Pharos" id="Q9H496">
    <property type="development level" value="Tbio"/>
</dbReference>
<dbReference type="Proteomes" id="UP000005640">
    <property type="component" value="Chromosome 1"/>
</dbReference>
<dbReference type="Bgee" id="ENSG00000169905">
    <property type="expression patterns" value="Expressed in adrenal tissue and 207 other cell types or tissues"/>
</dbReference>
<dbReference type="ExpressionAtlas" id="Q9H496">
    <property type="expression patterns" value="baseline and differential"/>
</dbReference>
<gene>
    <name type="primary">TOR1AIP2</name>
    <name type="synonym">IFRG15</name>
</gene>
<comment type="interaction">
    <interactant intactId="EBI-2510146">
        <id>Q9H496</id>
    </interactant>
    <interactant intactId="EBI-348399">
        <id>P22607</id>
        <label>FGFR3</label>
    </interactant>
    <organismsDiffer>false</organismsDiffer>
    <experiments>3</experiments>
</comment>
<comment type="interaction">
    <interactant intactId="EBI-2510146">
        <id>Q9H496</id>
    </interactant>
    <interactant intactId="EBI-351506">
        <id>P06396</id>
        <label>GSN</label>
    </interactant>
    <organismsDiffer>false</organismsDiffer>
    <experiments>3</experiments>
</comment>
<comment type="interaction">
    <interactant intactId="EBI-2510146">
        <id>Q9H496</id>
    </interactant>
    <interactant intactId="EBI-740322">
        <id>Q93062</id>
        <label>RBPMS</label>
    </interactant>
    <organismsDiffer>false</organismsDiffer>
    <experiments>3</experiments>
</comment>
<comment type="alternative products">
    <event type="alternative splicing"/>
    <isoform>
        <id>Q9H496-1</id>
        <name>IFRG15</name>
        <sequence type="displayed"/>
    </isoform>
    <isoform>
        <id>Q8NFQ8-1</id>
        <name>TOR1AIP2</name>
        <sequence type="external"/>
    </isoform>
</comment>
<comment type="induction">
    <text evidence="1">Induced by interferon alpha.</text>
</comment>
<comment type="miscellaneous">
    <molecule>Isoform IFRG15</molecule>
    <text>Dubious isoform.</text>
</comment>
<comment type="sequence caution" evidence="2">
    <conflict type="miscellaneous discrepancy">
        <sequence resource="EMBL-CDS" id="AAH32790"/>
    </conflict>
    <text>Contaminating sequence. Sequence of unknown origin in the N-terminal part.</text>
</comment>
<accession>Q9H496</accession>
<accession>Q05BU2</accession>
<name>IFG15_HUMAN</name>
<sequence length="131" mass="15348">MFSDNSHCPDCGQQWFPSLELGHWLYQTELVENECYQVFLDRINRADYCPECYPDNPANRSLVLPWSFPLEWAPQNLTRWTFEKACHPFLLGPPLVRKRIHDSRVAGFNPALQLILTRTDKTLNKKLGQNK</sequence>
<evidence type="ECO:0000269" key="1">
    <source ref="1"/>
</evidence>
<evidence type="ECO:0000305" key="2"/>
<keyword id="KW-0025">Alternative splicing</keyword>
<keyword id="KW-1267">Proteomics identification</keyword>
<keyword id="KW-1185">Reference proteome</keyword>
<reference key="1">
    <citation type="submission" date="2000-10" db="EMBL/GenBank/DDBJ databases">
        <title>Characterization of novel interferon responsive genes.</title>
        <authorList>
            <person name="Dron M."/>
            <person name="Meritet J.F."/>
            <person name="Tovey M.G."/>
        </authorList>
    </citation>
    <scope>NUCLEOTIDE SEQUENCE [MRNA]</scope>
    <scope>INDUCTION BY INTERFERON</scope>
    <source>
        <tissue>Lymphoma</tissue>
    </source>
</reference>
<reference key="2">
    <citation type="journal article" date="2004" name="Nat. Genet.">
        <title>Complete sequencing and characterization of 21,243 full-length human cDNAs.</title>
        <authorList>
            <person name="Ota T."/>
            <person name="Suzuki Y."/>
            <person name="Nishikawa T."/>
            <person name="Otsuki T."/>
            <person name="Sugiyama T."/>
            <person name="Irie R."/>
            <person name="Wakamatsu A."/>
            <person name="Hayashi K."/>
            <person name="Sato H."/>
            <person name="Nagai K."/>
            <person name="Kimura K."/>
            <person name="Makita H."/>
            <person name="Sekine M."/>
            <person name="Obayashi M."/>
            <person name="Nishi T."/>
            <person name="Shibahara T."/>
            <person name="Tanaka T."/>
            <person name="Ishii S."/>
            <person name="Yamamoto J."/>
            <person name="Saito K."/>
            <person name="Kawai Y."/>
            <person name="Isono Y."/>
            <person name="Nakamura Y."/>
            <person name="Nagahari K."/>
            <person name="Murakami K."/>
            <person name="Yasuda T."/>
            <person name="Iwayanagi T."/>
            <person name="Wagatsuma M."/>
            <person name="Shiratori A."/>
            <person name="Sudo H."/>
            <person name="Hosoiri T."/>
            <person name="Kaku Y."/>
            <person name="Kodaira H."/>
            <person name="Kondo H."/>
            <person name="Sugawara M."/>
            <person name="Takahashi M."/>
            <person name="Kanda K."/>
            <person name="Yokoi T."/>
            <person name="Furuya T."/>
            <person name="Kikkawa E."/>
            <person name="Omura Y."/>
            <person name="Abe K."/>
            <person name="Kamihara K."/>
            <person name="Katsuta N."/>
            <person name="Sato K."/>
            <person name="Tanikawa M."/>
            <person name="Yamazaki M."/>
            <person name="Ninomiya K."/>
            <person name="Ishibashi T."/>
            <person name="Yamashita H."/>
            <person name="Murakawa K."/>
            <person name="Fujimori K."/>
            <person name="Tanai H."/>
            <person name="Kimata M."/>
            <person name="Watanabe M."/>
            <person name="Hiraoka S."/>
            <person name="Chiba Y."/>
            <person name="Ishida S."/>
            <person name="Ono Y."/>
            <person name="Takiguchi S."/>
            <person name="Watanabe S."/>
            <person name="Yosida M."/>
            <person name="Hotuta T."/>
            <person name="Kusano J."/>
            <person name="Kanehori K."/>
            <person name="Takahashi-Fujii A."/>
            <person name="Hara H."/>
            <person name="Tanase T.-O."/>
            <person name="Nomura Y."/>
            <person name="Togiya S."/>
            <person name="Komai F."/>
            <person name="Hara R."/>
            <person name="Takeuchi K."/>
            <person name="Arita M."/>
            <person name="Imose N."/>
            <person name="Musashino K."/>
            <person name="Yuuki H."/>
            <person name="Oshima A."/>
            <person name="Sasaki N."/>
            <person name="Aotsuka S."/>
            <person name="Yoshikawa Y."/>
            <person name="Matsunawa H."/>
            <person name="Ichihara T."/>
            <person name="Shiohata N."/>
            <person name="Sano S."/>
            <person name="Moriya S."/>
            <person name="Momiyama H."/>
            <person name="Satoh N."/>
            <person name="Takami S."/>
            <person name="Terashima Y."/>
            <person name="Suzuki O."/>
            <person name="Nakagawa S."/>
            <person name="Senoh A."/>
            <person name="Mizoguchi H."/>
            <person name="Goto Y."/>
            <person name="Shimizu F."/>
            <person name="Wakebe H."/>
            <person name="Hishigaki H."/>
            <person name="Watanabe T."/>
            <person name="Sugiyama A."/>
            <person name="Takemoto M."/>
            <person name="Kawakami B."/>
            <person name="Yamazaki M."/>
            <person name="Watanabe K."/>
            <person name="Kumagai A."/>
            <person name="Itakura S."/>
            <person name="Fukuzumi Y."/>
            <person name="Fujimori Y."/>
            <person name="Komiyama M."/>
            <person name="Tashiro H."/>
            <person name="Tanigami A."/>
            <person name="Fujiwara T."/>
            <person name="Ono T."/>
            <person name="Yamada K."/>
            <person name="Fujii Y."/>
            <person name="Ozaki K."/>
            <person name="Hirao M."/>
            <person name="Ohmori Y."/>
            <person name="Kawabata A."/>
            <person name="Hikiji T."/>
            <person name="Kobatake N."/>
            <person name="Inagaki H."/>
            <person name="Ikema Y."/>
            <person name="Okamoto S."/>
            <person name="Okitani R."/>
            <person name="Kawakami T."/>
            <person name="Noguchi S."/>
            <person name="Itoh T."/>
            <person name="Shigeta K."/>
            <person name="Senba T."/>
            <person name="Matsumura K."/>
            <person name="Nakajima Y."/>
            <person name="Mizuno T."/>
            <person name="Morinaga M."/>
            <person name="Sasaki M."/>
            <person name="Togashi T."/>
            <person name="Oyama M."/>
            <person name="Hata H."/>
            <person name="Watanabe M."/>
            <person name="Komatsu T."/>
            <person name="Mizushima-Sugano J."/>
            <person name="Satoh T."/>
            <person name="Shirai Y."/>
            <person name="Takahashi Y."/>
            <person name="Nakagawa K."/>
            <person name="Okumura K."/>
            <person name="Nagase T."/>
            <person name="Nomura N."/>
            <person name="Kikuchi H."/>
            <person name="Masuho Y."/>
            <person name="Yamashita R."/>
            <person name="Nakai K."/>
            <person name="Yada T."/>
            <person name="Nakamura Y."/>
            <person name="Ohara O."/>
            <person name="Isogai T."/>
            <person name="Sugano S."/>
        </authorList>
    </citation>
    <scope>NUCLEOTIDE SEQUENCE [LARGE SCALE MRNA]</scope>
    <source>
        <tissue>Brain</tissue>
    </source>
</reference>
<reference key="3">
    <citation type="journal article" date="2006" name="Nature">
        <title>The DNA sequence and biological annotation of human chromosome 1.</title>
        <authorList>
            <person name="Gregory S.G."/>
            <person name="Barlow K.F."/>
            <person name="McLay K.E."/>
            <person name="Kaul R."/>
            <person name="Swarbreck D."/>
            <person name="Dunham A."/>
            <person name="Scott C.E."/>
            <person name="Howe K.L."/>
            <person name="Woodfine K."/>
            <person name="Spencer C.C.A."/>
            <person name="Jones M.C."/>
            <person name="Gillson C."/>
            <person name="Searle S."/>
            <person name="Zhou Y."/>
            <person name="Kokocinski F."/>
            <person name="McDonald L."/>
            <person name="Evans R."/>
            <person name="Phillips K."/>
            <person name="Atkinson A."/>
            <person name="Cooper R."/>
            <person name="Jones C."/>
            <person name="Hall R.E."/>
            <person name="Andrews T.D."/>
            <person name="Lloyd C."/>
            <person name="Ainscough R."/>
            <person name="Almeida J.P."/>
            <person name="Ambrose K.D."/>
            <person name="Anderson F."/>
            <person name="Andrew R.W."/>
            <person name="Ashwell R.I.S."/>
            <person name="Aubin K."/>
            <person name="Babbage A.K."/>
            <person name="Bagguley C.L."/>
            <person name="Bailey J."/>
            <person name="Beasley H."/>
            <person name="Bethel G."/>
            <person name="Bird C.P."/>
            <person name="Bray-Allen S."/>
            <person name="Brown J.Y."/>
            <person name="Brown A.J."/>
            <person name="Buckley D."/>
            <person name="Burton J."/>
            <person name="Bye J."/>
            <person name="Carder C."/>
            <person name="Chapman J.C."/>
            <person name="Clark S.Y."/>
            <person name="Clarke G."/>
            <person name="Clee C."/>
            <person name="Cobley V."/>
            <person name="Collier R.E."/>
            <person name="Corby N."/>
            <person name="Coville G.J."/>
            <person name="Davies J."/>
            <person name="Deadman R."/>
            <person name="Dunn M."/>
            <person name="Earthrowl M."/>
            <person name="Ellington A.G."/>
            <person name="Errington H."/>
            <person name="Frankish A."/>
            <person name="Frankland J."/>
            <person name="French L."/>
            <person name="Garner P."/>
            <person name="Garnett J."/>
            <person name="Gay L."/>
            <person name="Ghori M.R.J."/>
            <person name="Gibson R."/>
            <person name="Gilby L.M."/>
            <person name="Gillett W."/>
            <person name="Glithero R.J."/>
            <person name="Grafham D.V."/>
            <person name="Griffiths C."/>
            <person name="Griffiths-Jones S."/>
            <person name="Grocock R."/>
            <person name="Hammond S."/>
            <person name="Harrison E.S.I."/>
            <person name="Hart E."/>
            <person name="Haugen E."/>
            <person name="Heath P.D."/>
            <person name="Holmes S."/>
            <person name="Holt K."/>
            <person name="Howden P.J."/>
            <person name="Hunt A.R."/>
            <person name="Hunt S.E."/>
            <person name="Hunter G."/>
            <person name="Isherwood J."/>
            <person name="James R."/>
            <person name="Johnson C."/>
            <person name="Johnson D."/>
            <person name="Joy A."/>
            <person name="Kay M."/>
            <person name="Kershaw J.K."/>
            <person name="Kibukawa M."/>
            <person name="Kimberley A.M."/>
            <person name="King A."/>
            <person name="Knights A.J."/>
            <person name="Lad H."/>
            <person name="Laird G."/>
            <person name="Lawlor S."/>
            <person name="Leongamornlert D.A."/>
            <person name="Lloyd D.M."/>
            <person name="Loveland J."/>
            <person name="Lovell J."/>
            <person name="Lush M.J."/>
            <person name="Lyne R."/>
            <person name="Martin S."/>
            <person name="Mashreghi-Mohammadi M."/>
            <person name="Matthews L."/>
            <person name="Matthews N.S.W."/>
            <person name="McLaren S."/>
            <person name="Milne S."/>
            <person name="Mistry S."/>
            <person name="Moore M.J.F."/>
            <person name="Nickerson T."/>
            <person name="O'Dell C.N."/>
            <person name="Oliver K."/>
            <person name="Palmeiri A."/>
            <person name="Palmer S.A."/>
            <person name="Parker A."/>
            <person name="Patel D."/>
            <person name="Pearce A.V."/>
            <person name="Peck A.I."/>
            <person name="Pelan S."/>
            <person name="Phelps K."/>
            <person name="Phillimore B.J."/>
            <person name="Plumb R."/>
            <person name="Rajan J."/>
            <person name="Raymond C."/>
            <person name="Rouse G."/>
            <person name="Saenphimmachak C."/>
            <person name="Sehra H.K."/>
            <person name="Sheridan E."/>
            <person name="Shownkeen R."/>
            <person name="Sims S."/>
            <person name="Skuce C.D."/>
            <person name="Smith M."/>
            <person name="Steward C."/>
            <person name="Subramanian S."/>
            <person name="Sycamore N."/>
            <person name="Tracey A."/>
            <person name="Tromans A."/>
            <person name="Van Helmond Z."/>
            <person name="Wall M."/>
            <person name="Wallis J.M."/>
            <person name="White S."/>
            <person name="Whitehead S.L."/>
            <person name="Wilkinson J.E."/>
            <person name="Willey D.L."/>
            <person name="Williams H."/>
            <person name="Wilming L."/>
            <person name="Wray P.W."/>
            <person name="Wu Z."/>
            <person name="Coulson A."/>
            <person name="Vaudin M."/>
            <person name="Sulston J.E."/>
            <person name="Durbin R.M."/>
            <person name="Hubbard T."/>
            <person name="Wooster R."/>
            <person name="Dunham I."/>
            <person name="Carter N.P."/>
            <person name="McVean G."/>
            <person name="Ross M.T."/>
            <person name="Harrow J."/>
            <person name="Olson M.V."/>
            <person name="Beck S."/>
            <person name="Rogers J."/>
            <person name="Bentley D.R."/>
        </authorList>
    </citation>
    <scope>NUCLEOTIDE SEQUENCE [LARGE SCALE GENOMIC DNA]</scope>
</reference>
<reference key="4">
    <citation type="submission" date="2005-07" db="EMBL/GenBank/DDBJ databases">
        <authorList>
            <person name="Mural R.J."/>
            <person name="Istrail S."/>
            <person name="Sutton G."/>
            <person name="Florea L."/>
            <person name="Halpern A.L."/>
            <person name="Mobarry C.M."/>
            <person name="Lippert R."/>
            <person name="Walenz B."/>
            <person name="Shatkay H."/>
            <person name="Dew I."/>
            <person name="Miller J.R."/>
            <person name="Flanigan M.J."/>
            <person name="Edwards N.J."/>
            <person name="Bolanos R."/>
            <person name="Fasulo D."/>
            <person name="Halldorsson B.V."/>
            <person name="Hannenhalli S."/>
            <person name="Turner R."/>
            <person name="Yooseph S."/>
            <person name="Lu F."/>
            <person name="Nusskern D.R."/>
            <person name="Shue B.C."/>
            <person name="Zheng X.H."/>
            <person name="Zhong F."/>
            <person name="Delcher A.L."/>
            <person name="Huson D.H."/>
            <person name="Kravitz S.A."/>
            <person name="Mouchard L."/>
            <person name="Reinert K."/>
            <person name="Remington K.A."/>
            <person name="Clark A.G."/>
            <person name="Waterman M.S."/>
            <person name="Eichler E.E."/>
            <person name="Adams M.D."/>
            <person name="Hunkapiller M.W."/>
            <person name="Myers E.W."/>
            <person name="Venter J.C."/>
        </authorList>
    </citation>
    <scope>NUCLEOTIDE SEQUENCE [LARGE SCALE GENOMIC DNA]</scope>
</reference>
<reference key="5">
    <citation type="journal article" date="2004" name="Genome Res.">
        <title>The status, quality, and expansion of the NIH full-length cDNA project: the Mammalian Gene Collection (MGC).</title>
        <authorList>
            <consortium name="The MGC Project Team"/>
        </authorList>
    </citation>
    <scope>NUCLEOTIDE SEQUENCE [LARGE SCALE MRNA]</scope>
    <source>
        <tissue>Placenta</tissue>
    </source>
</reference>
<feature type="chain" id="PRO_0000421071" description="Torsin-1A-interacting protein 2, isoform IFRG15">
    <location>
        <begin position="1"/>
        <end position="131"/>
    </location>
</feature>
<protein>
    <recommendedName>
        <fullName>Torsin-1A-interacting protein 2, isoform IFRG15</fullName>
    </recommendedName>
    <alternativeName>
        <fullName>15 kDa interferon-responsive protein</fullName>
        <shortName>IFRG15</shortName>
    </alternativeName>
</protein>
<proteinExistence type="evidence at protein level"/>
<organism>
    <name type="scientific">Homo sapiens</name>
    <name type="common">Human</name>
    <dbReference type="NCBI Taxonomy" id="9606"/>
    <lineage>
        <taxon>Eukaryota</taxon>
        <taxon>Metazoa</taxon>
        <taxon>Chordata</taxon>
        <taxon>Craniata</taxon>
        <taxon>Vertebrata</taxon>
        <taxon>Euteleostomi</taxon>
        <taxon>Mammalia</taxon>
        <taxon>Eutheria</taxon>
        <taxon>Euarchontoglires</taxon>
        <taxon>Primates</taxon>
        <taxon>Haplorrhini</taxon>
        <taxon>Catarrhini</taxon>
        <taxon>Hominidae</taxon>
        <taxon>Homo</taxon>
    </lineage>
</organism>